<feature type="chain" id="PRO_0000051650" description="Cytochrome P450 1A2">
    <location>
        <begin position="1"/>
        <end position="515"/>
    </location>
</feature>
<feature type="binding site" evidence="1">
    <location>
        <position position="226"/>
    </location>
    <ligand>
        <name>substrate</name>
    </ligand>
</feature>
<feature type="binding site" description="axial binding residue" evidence="1">
    <location>
        <position position="458"/>
    </location>
    <ligand>
        <name>heme</name>
        <dbReference type="ChEBI" id="CHEBI:30413"/>
    </ligand>
    <ligandPart>
        <name>Fe</name>
        <dbReference type="ChEBI" id="CHEBI:18248"/>
    </ligandPart>
</feature>
<feature type="glycosylation site" description="O-linked (GlcNAc) serine" evidence="1">
    <location>
        <position position="69"/>
    </location>
</feature>
<feature type="sequence conflict" description="In Ref. 2; AAB70866." evidence="3" ref="2">
    <original>V</original>
    <variation>L</variation>
    <location>
        <position position="149"/>
    </location>
</feature>
<protein>
    <recommendedName>
        <fullName>Cytochrome P450 1A2</fullName>
        <ecNumber evidence="2">1.14.14.1</ecNumber>
    </recommendedName>
    <alternativeName>
        <fullName>CYPIA2</fullName>
    </alternativeName>
    <alternativeName>
        <fullName evidence="2">Cholesterol 25-hydroxylase</fullName>
    </alternativeName>
    <alternativeName>
        <fullName>Hydroperoxy icosatetraenoate dehydratase</fullName>
        <ecNumber evidence="2">4.2.1.152</ecNumber>
    </alternativeName>
</protein>
<accession>Q64391</accession>
<accession>Q64404</accession>
<gene>
    <name type="primary">CYP1A2</name>
</gene>
<keyword id="KW-0256">Endoplasmic reticulum</keyword>
<keyword id="KW-0276">Fatty acid metabolism</keyword>
<keyword id="KW-0325">Glycoprotein</keyword>
<keyword id="KW-0349">Heme</keyword>
<keyword id="KW-0408">Iron</keyword>
<keyword id="KW-0443">Lipid metabolism</keyword>
<keyword id="KW-0456">Lyase</keyword>
<keyword id="KW-0472">Membrane</keyword>
<keyword id="KW-0479">Metal-binding</keyword>
<keyword id="KW-0492">Microsome</keyword>
<keyword id="KW-0503">Monooxygenase</keyword>
<keyword id="KW-0560">Oxidoreductase</keyword>
<keyword id="KW-1185">Reference proteome</keyword>
<keyword id="KW-0753">Steroid metabolism</keyword>
<keyword id="KW-1207">Sterol metabolism</keyword>
<proteinExistence type="evidence at transcript level"/>
<dbReference type="EC" id="1.14.14.1" evidence="2"/>
<dbReference type="EC" id="4.2.1.152" evidence="2"/>
<dbReference type="EMBL" id="D50457">
    <property type="protein sequence ID" value="BAA09048.1"/>
    <property type="molecule type" value="mRNA"/>
</dbReference>
<dbReference type="EMBL" id="U23501">
    <property type="protein sequence ID" value="AAB70866.1"/>
    <property type="molecule type" value="mRNA"/>
</dbReference>
<dbReference type="RefSeq" id="NP_001166165.1">
    <property type="nucleotide sequence ID" value="NM_001172694.1"/>
</dbReference>
<dbReference type="SMR" id="Q64391"/>
<dbReference type="FunCoup" id="Q64391">
    <property type="interactions" value="688"/>
</dbReference>
<dbReference type="STRING" id="10141.ENSCPOP00000017610"/>
<dbReference type="GlyCosmos" id="Q64391">
    <property type="glycosylation" value="1 site, No reported glycans"/>
</dbReference>
<dbReference type="GeneID" id="100135513"/>
<dbReference type="KEGG" id="cpoc:100135513"/>
<dbReference type="CTD" id="1544"/>
<dbReference type="eggNOG" id="KOG0156">
    <property type="taxonomic scope" value="Eukaryota"/>
</dbReference>
<dbReference type="HOGENOM" id="CLU_001570_22_0_1"/>
<dbReference type="InParanoid" id="Q64391"/>
<dbReference type="OrthoDB" id="1055148at2759"/>
<dbReference type="TreeFam" id="TF105095"/>
<dbReference type="UniPathway" id="UPA00296"/>
<dbReference type="UniPathway" id="UPA00383"/>
<dbReference type="UniPathway" id="UPA00912"/>
<dbReference type="Proteomes" id="UP000005447">
    <property type="component" value="Unassembled WGS sequence"/>
</dbReference>
<dbReference type="GO" id="GO:0005789">
    <property type="term" value="C:endoplasmic reticulum membrane"/>
    <property type="evidence" value="ECO:0007669"/>
    <property type="project" value="UniProtKB-SubCell"/>
</dbReference>
<dbReference type="GO" id="GO:0101020">
    <property type="term" value="F:estrogen 16-alpha-hydroxylase activity"/>
    <property type="evidence" value="ECO:0000250"/>
    <property type="project" value="UniProtKB"/>
</dbReference>
<dbReference type="GO" id="GO:0101021">
    <property type="term" value="F:estrogen 2-hydroxylase activity"/>
    <property type="evidence" value="ECO:0000250"/>
    <property type="project" value="UniProtKB"/>
</dbReference>
<dbReference type="GO" id="GO:0020037">
    <property type="term" value="F:heme binding"/>
    <property type="evidence" value="ECO:0000250"/>
    <property type="project" value="UniProtKB"/>
</dbReference>
<dbReference type="GO" id="GO:0106256">
    <property type="term" value="F:hydroperoxy icosatetraenoate dehydratase activity"/>
    <property type="evidence" value="ECO:0007669"/>
    <property type="project" value="UniProtKB-EC"/>
</dbReference>
<dbReference type="GO" id="GO:0005506">
    <property type="term" value="F:iron ion binding"/>
    <property type="evidence" value="ECO:0007669"/>
    <property type="project" value="InterPro"/>
</dbReference>
<dbReference type="GO" id="GO:0004508">
    <property type="term" value="F:steroid 17-alpha-monooxygenase activity"/>
    <property type="evidence" value="ECO:0007669"/>
    <property type="project" value="TreeGrafter"/>
</dbReference>
<dbReference type="GO" id="GO:0019369">
    <property type="term" value="P:arachidonate metabolic process"/>
    <property type="evidence" value="ECO:0007669"/>
    <property type="project" value="UniProtKB-UniPathway"/>
</dbReference>
<dbReference type="GO" id="GO:0008203">
    <property type="term" value="P:cholesterol metabolic process"/>
    <property type="evidence" value="ECO:0007669"/>
    <property type="project" value="UniProtKB-UniPathway"/>
</dbReference>
<dbReference type="GO" id="GO:0008210">
    <property type="term" value="P:estrogen metabolic process"/>
    <property type="evidence" value="ECO:0000250"/>
    <property type="project" value="UniProtKB"/>
</dbReference>
<dbReference type="GO" id="GO:0042446">
    <property type="term" value="P:hormone biosynthetic process"/>
    <property type="evidence" value="ECO:0007669"/>
    <property type="project" value="TreeGrafter"/>
</dbReference>
<dbReference type="GO" id="GO:0042448">
    <property type="term" value="P:progesterone metabolic process"/>
    <property type="evidence" value="ECO:0007669"/>
    <property type="project" value="TreeGrafter"/>
</dbReference>
<dbReference type="GO" id="GO:0042572">
    <property type="term" value="P:retinol metabolic process"/>
    <property type="evidence" value="ECO:0000250"/>
    <property type="project" value="UniProtKB"/>
</dbReference>
<dbReference type="CDD" id="cd20676">
    <property type="entry name" value="CYP1A"/>
    <property type="match status" value="1"/>
</dbReference>
<dbReference type="FunFam" id="1.10.630.10:FF:000002">
    <property type="entry name" value="Cytochrome P450 1A1"/>
    <property type="match status" value="1"/>
</dbReference>
<dbReference type="Gene3D" id="1.10.630.10">
    <property type="entry name" value="Cytochrome P450"/>
    <property type="match status" value="1"/>
</dbReference>
<dbReference type="InterPro" id="IPR001128">
    <property type="entry name" value="Cyt_P450"/>
</dbReference>
<dbReference type="InterPro" id="IPR017972">
    <property type="entry name" value="Cyt_P450_CS"/>
</dbReference>
<dbReference type="InterPro" id="IPR002401">
    <property type="entry name" value="Cyt_P450_E_grp-I"/>
</dbReference>
<dbReference type="InterPro" id="IPR008066">
    <property type="entry name" value="Cyt_P450_E_grp-I_CYP1"/>
</dbReference>
<dbReference type="InterPro" id="IPR036396">
    <property type="entry name" value="Cyt_P450_sf"/>
</dbReference>
<dbReference type="PANTHER" id="PTHR24289:SF21">
    <property type="entry name" value="CYTOCHROME P450 1A"/>
    <property type="match status" value="1"/>
</dbReference>
<dbReference type="PANTHER" id="PTHR24289">
    <property type="entry name" value="STEROID 17-ALPHA-HYDROXYLASE/17,20 LYASE"/>
    <property type="match status" value="1"/>
</dbReference>
<dbReference type="Pfam" id="PF00067">
    <property type="entry name" value="p450"/>
    <property type="match status" value="1"/>
</dbReference>
<dbReference type="PRINTS" id="PR00463">
    <property type="entry name" value="EP450I"/>
</dbReference>
<dbReference type="PRINTS" id="PR01683">
    <property type="entry name" value="EP450ICYP1A"/>
</dbReference>
<dbReference type="PRINTS" id="PR00385">
    <property type="entry name" value="P450"/>
</dbReference>
<dbReference type="SUPFAM" id="SSF48264">
    <property type="entry name" value="Cytochrome P450"/>
    <property type="match status" value="1"/>
</dbReference>
<dbReference type="PROSITE" id="PS00086">
    <property type="entry name" value="CYTOCHROME_P450"/>
    <property type="match status" value="1"/>
</dbReference>
<reference key="1">
    <citation type="journal article" date="1997" name="Arch. Biochem. Biophys.">
        <title>Regulation of CYP1A and CYP3A mRNAs by ascorbic acid in guinea pigs.</title>
        <authorList>
            <person name="Mori T."/>
            <person name="Itoh S."/>
            <person name="Ohgiya S."/>
            <person name="Ishizaki K."/>
            <person name="Kamataki T."/>
        </authorList>
    </citation>
    <scope>NUCLEOTIDE SEQUENCE [MRNA]</scope>
    <source>
        <strain>Hartley</strain>
        <tissue>Liver</tissue>
    </source>
</reference>
<reference key="2">
    <citation type="submission" date="1997-09" db="EMBL/GenBank/DDBJ databases">
        <authorList>
            <person name="Black V.H."/>
        </authorList>
    </citation>
    <scope>NUCLEOTIDE SEQUENCE [MRNA]</scope>
    <source>
        <strain>Hartley</strain>
        <tissue>Liver</tissue>
    </source>
</reference>
<comment type="function">
    <text evidence="2">A cytochrome P450 monooxygenase involved in the metabolism of various endogenous substrates, including fatty acids, steroid hormones and vitamins. Mechanistically, uses molecular oxygen inserting one oxygen atom into a substrate, and reducing the second into a water molecule, with two electrons provided by NADPH via cytochrome P450 reductase (NADPH--hemoprotein reductase). Catalyzes the hydroxylation of carbon-hydrogen bonds. Exhibits high catalytic activity for the formation of hydroxyestrogens from estrone (E1) and 17beta-estradiol (E2), namely 2-hydroxy E1 and E2. Metabolizes cholesterol toward 25-hydroxycholesterol, a physiological regulator of cellular cholesterol homeostasis. May act as a major enzyme for all-trans retinoic acid biosynthesis in the liver. Catalyzes two successive oxidative transformation of all-trans retinol to all-trans retinal and then to the active form all-trans retinoic acid. Primarily catalyzes stereoselective epoxidation of the last double bond of polyunsaturated fatty acids (PUFA), displaying a strong preference for the (R,S) stereoisomer. Catalyzes bisallylic hydroxylation and omega-1 hydroxylation of PUFA. May also participate in eicosanoids metabolism by converting hydroperoxide species into oxo metabolites (lipoxygenase-like reaction, NADPH-independent). Plays a role in the oxidative metabolism of xenobiotics. Catalyzes the N-hydroxylation of heterocyclic amines and the O-deethylation of phenacetin. Metabolizes caffeine via N3-demethylation.</text>
</comment>
<comment type="catalytic activity">
    <reaction evidence="2">
        <text>an organic molecule + reduced [NADPH--hemoprotein reductase] + O2 = an alcohol + oxidized [NADPH--hemoprotein reductase] + H2O + H(+)</text>
        <dbReference type="Rhea" id="RHEA:17149"/>
        <dbReference type="Rhea" id="RHEA-COMP:11964"/>
        <dbReference type="Rhea" id="RHEA-COMP:11965"/>
        <dbReference type="ChEBI" id="CHEBI:15377"/>
        <dbReference type="ChEBI" id="CHEBI:15378"/>
        <dbReference type="ChEBI" id="CHEBI:15379"/>
        <dbReference type="ChEBI" id="CHEBI:30879"/>
        <dbReference type="ChEBI" id="CHEBI:57618"/>
        <dbReference type="ChEBI" id="CHEBI:58210"/>
        <dbReference type="ChEBI" id="CHEBI:142491"/>
        <dbReference type="EC" id="1.14.14.1"/>
    </reaction>
    <physiologicalReaction direction="left-to-right" evidence="2">
        <dbReference type="Rhea" id="RHEA:17150"/>
    </physiologicalReaction>
</comment>
<comment type="catalytic activity">
    <reaction evidence="2">
        <text>17beta-estradiol + reduced [NADPH--hemoprotein reductase] + O2 = 2-hydroxy-17beta-estradiol + oxidized [NADPH--hemoprotein reductase] + H2O + H(+)</text>
        <dbReference type="Rhea" id="RHEA:47212"/>
        <dbReference type="Rhea" id="RHEA-COMP:11964"/>
        <dbReference type="Rhea" id="RHEA-COMP:11965"/>
        <dbReference type="ChEBI" id="CHEBI:15377"/>
        <dbReference type="ChEBI" id="CHEBI:15378"/>
        <dbReference type="ChEBI" id="CHEBI:15379"/>
        <dbReference type="ChEBI" id="CHEBI:16469"/>
        <dbReference type="ChEBI" id="CHEBI:28744"/>
        <dbReference type="ChEBI" id="CHEBI:57618"/>
        <dbReference type="ChEBI" id="CHEBI:58210"/>
    </reaction>
    <physiologicalReaction direction="left-to-right" evidence="2">
        <dbReference type="Rhea" id="RHEA:47213"/>
    </physiologicalReaction>
</comment>
<comment type="catalytic activity">
    <reaction evidence="2">
        <text>17beta-estradiol + reduced [NADPH--hemoprotein reductase] + O2 = 4-hydroxy-17beta-estradiol + oxidized [NADPH--hemoprotein reductase] + H2O + H(+)</text>
        <dbReference type="Rhea" id="RHEA:47280"/>
        <dbReference type="Rhea" id="RHEA-COMP:11964"/>
        <dbReference type="Rhea" id="RHEA-COMP:11965"/>
        <dbReference type="ChEBI" id="CHEBI:15377"/>
        <dbReference type="ChEBI" id="CHEBI:15378"/>
        <dbReference type="ChEBI" id="CHEBI:15379"/>
        <dbReference type="ChEBI" id="CHEBI:16469"/>
        <dbReference type="ChEBI" id="CHEBI:57618"/>
        <dbReference type="ChEBI" id="CHEBI:58210"/>
        <dbReference type="ChEBI" id="CHEBI:62845"/>
    </reaction>
    <physiologicalReaction direction="left-to-right" evidence="2">
        <dbReference type="Rhea" id="RHEA:47281"/>
    </physiologicalReaction>
</comment>
<comment type="catalytic activity">
    <reaction evidence="2">
        <text>estrone + reduced [NADPH--hemoprotein reductase] + O2 = 2-hydroxyestrone + oxidized [NADPH--hemoprotein reductase] + H2O + H(+)</text>
        <dbReference type="Rhea" id="RHEA:47208"/>
        <dbReference type="Rhea" id="RHEA-COMP:11964"/>
        <dbReference type="Rhea" id="RHEA-COMP:11965"/>
        <dbReference type="ChEBI" id="CHEBI:1156"/>
        <dbReference type="ChEBI" id="CHEBI:15377"/>
        <dbReference type="ChEBI" id="CHEBI:15378"/>
        <dbReference type="ChEBI" id="CHEBI:15379"/>
        <dbReference type="ChEBI" id="CHEBI:17263"/>
        <dbReference type="ChEBI" id="CHEBI:57618"/>
        <dbReference type="ChEBI" id="CHEBI:58210"/>
    </reaction>
    <physiologicalReaction direction="left-to-right" evidence="2">
        <dbReference type="Rhea" id="RHEA:47209"/>
    </physiologicalReaction>
</comment>
<comment type="catalytic activity">
    <reaction evidence="2">
        <text>estrone + reduced [NADPH--hemoprotein reductase] + O2 = 4-hydroxyestrone + oxidized [NADPH--hemoprotein reductase] + H2O + H(+)</text>
        <dbReference type="Rhea" id="RHEA:47292"/>
        <dbReference type="Rhea" id="RHEA-COMP:11964"/>
        <dbReference type="Rhea" id="RHEA-COMP:11965"/>
        <dbReference type="ChEBI" id="CHEBI:15377"/>
        <dbReference type="ChEBI" id="CHEBI:15378"/>
        <dbReference type="ChEBI" id="CHEBI:15379"/>
        <dbReference type="ChEBI" id="CHEBI:17263"/>
        <dbReference type="ChEBI" id="CHEBI:57618"/>
        <dbReference type="ChEBI" id="CHEBI:58210"/>
        <dbReference type="ChEBI" id="CHEBI:87602"/>
    </reaction>
    <physiologicalReaction direction="left-to-right" evidence="2">
        <dbReference type="Rhea" id="RHEA:47293"/>
    </physiologicalReaction>
</comment>
<comment type="catalytic activity">
    <reaction evidence="2">
        <text>cholesterol + reduced [NADPH--hemoprotein reductase] + O2 = 25-hydroxycholesterol + oxidized [NADPH--hemoprotein reductase] + H2O + H(+)</text>
        <dbReference type="Rhea" id="RHEA:50256"/>
        <dbReference type="Rhea" id="RHEA-COMP:11964"/>
        <dbReference type="Rhea" id="RHEA-COMP:11965"/>
        <dbReference type="ChEBI" id="CHEBI:15377"/>
        <dbReference type="ChEBI" id="CHEBI:15378"/>
        <dbReference type="ChEBI" id="CHEBI:15379"/>
        <dbReference type="ChEBI" id="CHEBI:16113"/>
        <dbReference type="ChEBI" id="CHEBI:42977"/>
        <dbReference type="ChEBI" id="CHEBI:57618"/>
        <dbReference type="ChEBI" id="CHEBI:58210"/>
    </reaction>
    <physiologicalReaction direction="left-to-right" evidence="2">
        <dbReference type="Rhea" id="RHEA:50257"/>
    </physiologicalReaction>
</comment>
<comment type="catalytic activity">
    <reaction evidence="2">
        <text>all-trans-retinol + reduced [NADPH--hemoprotein reductase] + O2 = all-trans-retinal + oxidized [NADPH--hemoprotein reductase] + 2 H2O + H(+)</text>
        <dbReference type="Rhea" id="RHEA:42092"/>
        <dbReference type="Rhea" id="RHEA-COMP:11964"/>
        <dbReference type="Rhea" id="RHEA-COMP:11965"/>
        <dbReference type="ChEBI" id="CHEBI:15377"/>
        <dbReference type="ChEBI" id="CHEBI:15378"/>
        <dbReference type="ChEBI" id="CHEBI:15379"/>
        <dbReference type="ChEBI" id="CHEBI:17336"/>
        <dbReference type="ChEBI" id="CHEBI:17898"/>
        <dbReference type="ChEBI" id="CHEBI:57618"/>
        <dbReference type="ChEBI" id="CHEBI:58210"/>
    </reaction>
    <physiologicalReaction direction="left-to-right" evidence="2">
        <dbReference type="Rhea" id="RHEA:42093"/>
    </physiologicalReaction>
</comment>
<comment type="catalytic activity">
    <reaction evidence="2">
        <text>all-trans-retinal + reduced [NADPH--hemoprotein reductase] + O2 = all-trans-retinoate + oxidized [NADPH--hemoprotein reductase] + H2O + 2 H(+)</text>
        <dbReference type="Rhea" id="RHEA:42088"/>
        <dbReference type="Rhea" id="RHEA-COMP:11964"/>
        <dbReference type="Rhea" id="RHEA-COMP:11965"/>
        <dbReference type="ChEBI" id="CHEBI:15377"/>
        <dbReference type="ChEBI" id="CHEBI:15378"/>
        <dbReference type="ChEBI" id="CHEBI:15379"/>
        <dbReference type="ChEBI" id="CHEBI:17898"/>
        <dbReference type="ChEBI" id="CHEBI:35291"/>
        <dbReference type="ChEBI" id="CHEBI:57618"/>
        <dbReference type="ChEBI" id="CHEBI:58210"/>
    </reaction>
    <physiologicalReaction direction="left-to-right" evidence="2">
        <dbReference type="Rhea" id="RHEA:42089"/>
    </physiologicalReaction>
</comment>
<comment type="catalytic activity">
    <reaction evidence="2">
        <text>(5Z,8Z,11Z,14Z)-eicosatetraenoate + reduced [NADPH--hemoprotein reductase] + O2 = (14R,15S)-epoxy-(5Z,8Z,11Z)-eicosatrienoate + oxidized [NADPH--hemoprotein reductase] + H2O + H(+)</text>
        <dbReference type="Rhea" id="RHEA:49860"/>
        <dbReference type="Rhea" id="RHEA-COMP:11964"/>
        <dbReference type="Rhea" id="RHEA-COMP:11965"/>
        <dbReference type="ChEBI" id="CHEBI:15377"/>
        <dbReference type="ChEBI" id="CHEBI:15378"/>
        <dbReference type="ChEBI" id="CHEBI:15379"/>
        <dbReference type="ChEBI" id="CHEBI:32395"/>
        <dbReference type="ChEBI" id="CHEBI:57618"/>
        <dbReference type="ChEBI" id="CHEBI:58210"/>
        <dbReference type="ChEBI" id="CHEBI:131965"/>
    </reaction>
    <physiologicalReaction direction="left-to-right" evidence="2">
        <dbReference type="Rhea" id="RHEA:49861"/>
    </physiologicalReaction>
</comment>
<comment type="catalytic activity">
    <reaction evidence="2">
        <text>(5Z,8Z,11Z,14Z)-eicosatetraenoate + reduced [NADPH--hemoprotein reductase] + O2 = (14S,15R)-epoxy-(5Z,8Z,11Z)-eicosatrienoate + oxidized [NADPH--hemoprotein reductase] + H2O + H(+)</text>
        <dbReference type="Rhea" id="RHEA:49856"/>
        <dbReference type="Rhea" id="RHEA-COMP:11964"/>
        <dbReference type="Rhea" id="RHEA-COMP:11965"/>
        <dbReference type="ChEBI" id="CHEBI:15377"/>
        <dbReference type="ChEBI" id="CHEBI:15378"/>
        <dbReference type="ChEBI" id="CHEBI:15379"/>
        <dbReference type="ChEBI" id="CHEBI:32395"/>
        <dbReference type="ChEBI" id="CHEBI:57618"/>
        <dbReference type="ChEBI" id="CHEBI:58210"/>
        <dbReference type="ChEBI" id="CHEBI:131964"/>
    </reaction>
    <physiologicalReaction direction="left-to-right" evidence="2">
        <dbReference type="Rhea" id="RHEA:49857"/>
    </physiologicalReaction>
</comment>
<comment type="catalytic activity">
    <reaction evidence="2">
        <text>(5Z,8Z,11Z,14Z,17Z)-eicosapentaenoate + reduced [NADPH--hemoprotein reductase] + O2 = (17R,18S)-epoxy-(5Z,8Z,11Z,14Z)-eicosatetraenoate + oxidized [NADPH--hemoprotein reductase] + H2O + H(+)</text>
        <dbReference type="Rhea" id="RHEA:39779"/>
        <dbReference type="Rhea" id="RHEA-COMP:11964"/>
        <dbReference type="Rhea" id="RHEA-COMP:11965"/>
        <dbReference type="ChEBI" id="CHEBI:15377"/>
        <dbReference type="ChEBI" id="CHEBI:15378"/>
        <dbReference type="ChEBI" id="CHEBI:15379"/>
        <dbReference type="ChEBI" id="CHEBI:57618"/>
        <dbReference type="ChEBI" id="CHEBI:58210"/>
        <dbReference type="ChEBI" id="CHEBI:58562"/>
        <dbReference type="ChEBI" id="CHEBI:76634"/>
    </reaction>
    <physiologicalReaction direction="left-to-right" evidence="2">
        <dbReference type="Rhea" id="RHEA:39780"/>
    </physiologicalReaction>
</comment>
<comment type="catalytic activity">
    <reaction evidence="2">
        <text>(4Z,7Z,10Z,13Z,16Z,19Z)-docosahexaenoate + reduced [NADPH--hemoprotein reductase] + O2 = (19R,20S)-epoxy-(4Z,7Z,10Z,13Z,16Z)-docosapentaenoate + oxidized [NADPH--hemoprotein reductase] + H2O + H(+)</text>
        <dbReference type="Rhea" id="RHEA:52120"/>
        <dbReference type="Rhea" id="RHEA-COMP:11964"/>
        <dbReference type="Rhea" id="RHEA-COMP:11965"/>
        <dbReference type="ChEBI" id="CHEBI:15377"/>
        <dbReference type="ChEBI" id="CHEBI:15378"/>
        <dbReference type="ChEBI" id="CHEBI:15379"/>
        <dbReference type="ChEBI" id="CHEBI:57618"/>
        <dbReference type="ChEBI" id="CHEBI:58210"/>
        <dbReference type="ChEBI" id="CHEBI:77016"/>
        <dbReference type="ChEBI" id="CHEBI:136410"/>
    </reaction>
    <physiologicalReaction direction="left-to-right" evidence="2">
        <dbReference type="Rhea" id="RHEA:52121"/>
    </physiologicalReaction>
</comment>
<comment type="catalytic activity">
    <reaction evidence="2">
        <text>(5S)-hydroperoxy-(6E,8Z,11Z,14Z)-eicosatetraenoate = 5-oxo-(6E,8Z,11Z,14Z)-eicosatetraenoate + H2O</text>
        <dbReference type="Rhea" id="RHEA:48632"/>
        <dbReference type="ChEBI" id="CHEBI:15377"/>
        <dbReference type="ChEBI" id="CHEBI:57450"/>
        <dbReference type="ChEBI" id="CHEBI:65342"/>
    </reaction>
    <physiologicalReaction direction="left-to-right" evidence="2">
        <dbReference type="Rhea" id="RHEA:48633"/>
    </physiologicalReaction>
</comment>
<comment type="catalytic activity">
    <reaction evidence="2">
        <text>(12S)-hydroperoxy-(5Z,8Z,10E,14Z)-eicosatetraenoate = 12-oxo-(5Z,8Z,10E,14Z)-eicosatetraenoate + H2O</text>
        <dbReference type="Rhea" id="RHEA:37947"/>
        <dbReference type="ChEBI" id="CHEBI:15377"/>
        <dbReference type="ChEBI" id="CHEBI:57444"/>
        <dbReference type="ChEBI" id="CHEBI:75231"/>
        <dbReference type="EC" id="4.2.1.152"/>
    </reaction>
    <physiologicalReaction direction="left-to-right" evidence="2">
        <dbReference type="Rhea" id="RHEA:37948"/>
    </physiologicalReaction>
</comment>
<comment type="catalytic activity">
    <reaction evidence="2">
        <text>(15S)-hydroperoxy-(5Z,8Z,11Z,13E)-eicosatetraenoate = 15-oxo-(5Z,8Z,11Z,13E)-eicosatetraenoate + H2O</text>
        <dbReference type="Rhea" id="RHEA:48636"/>
        <dbReference type="ChEBI" id="CHEBI:15377"/>
        <dbReference type="ChEBI" id="CHEBI:57410"/>
        <dbReference type="ChEBI" id="CHEBI:57446"/>
    </reaction>
    <physiologicalReaction direction="left-to-right" evidence="2">
        <dbReference type="Rhea" id="RHEA:48637"/>
    </physiologicalReaction>
</comment>
<comment type="catalytic activity">
    <reaction evidence="2">
        <text>(13S)-hydroperoxy-(9Z,11E)-octadecadienoate = 13-oxo-(9Z,11E)-octadecadienoate + H2O</text>
        <dbReference type="Rhea" id="RHEA:48716"/>
        <dbReference type="ChEBI" id="CHEBI:15377"/>
        <dbReference type="ChEBI" id="CHEBI:57466"/>
        <dbReference type="ChEBI" id="CHEBI:90781"/>
    </reaction>
    <physiologicalReaction direction="left-to-right" evidence="2">
        <dbReference type="Rhea" id="RHEA:48717"/>
    </physiologicalReaction>
</comment>
<comment type="catalytic activity">
    <reaction evidence="2">
        <text>(5Z,8Z,11Z,14Z)-eicosatetraenoate + reduced [NADPH--hemoprotein reductase] + O2 = 13-hydroxy-(5Z,8Z,11Z,14Z)-eicosatetraenoate + oxidized [NADPH--hemoprotein reductase] + H2O + H(+)</text>
        <dbReference type="Rhea" id="RHEA:52292"/>
        <dbReference type="Rhea" id="RHEA-COMP:11964"/>
        <dbReference type="Rhea" id="RHEA-COMP:11965"/>
        <dbReference type="ChEBI" id="CHEBI:15377"/>
        <dbReference type="ChEBI" id="CHEBI:15378"/>
        <dbReference type="ChEBI" id="CHEBI:15379"/>
        <dbReference type="ChEBI" id="CHEBI:32395"/>
        <dbReference type="ChEBI" id="CHEBI:57618"/>
        <dbReference type="ChEBI" id="CHEBI:58210"/>
        <dbReference type="ChEBI" id="CHEBI:136524"/>
    </reaction>
    <physiologicalReaction direction="left-to-right" evidence="2">
        <dbReference type="Rhea" id="RHEA:52293"/>
    </physiologicalReaction>
</comment>
<comment type="catalytic activity">
    <reaction evidence="2">
        <text>(5Z,8Z,11Z,14Z)-eicosatetraenoate + reduced [NADPH--hemoprotein reductase] + O2 = 19-hydroxy-(5Z,8Z,11Z,14Z)-eicosatetraenoate + oxidized [NADPH--hemoprotein reductase] + H2O + H(+)</text>
        <dbReference type="Rhea" id="RHEA:39759"/>
        <dbReference type="Rhea" id="RHEA-COMP:11964"/>
        <dbReference type="Rhea" id="RHEA-COMP:11965"/>
        <dbReference type="ChEBI" id="CHEBI:15377"/>
        <dbReference type="ChEBI" id="CHEBI:15378"/>
        <dbReference type="ChEBI" id="CHEBI:15379"/>
        <dbReference type="ChEBI" id="CHEBI:32395"/>
        <dbReference type="ChEBI" id="CHEBI:57618"/>
        <dbReference type="ChEBI" id="CHEBI:58210"/>
        <dbReference type="ChEBI" id="CHEBI:76627"/>
    </reaction>
    <physiologicalReaction direction="left-to-right" evidence="2">
        <dbReference type="Rhea" id="RHEA:39760"/>
    </physiologicalReaction>
</comment>
<comment type="catalytic activity">
    <reaction evidence="2">
        <text>(9Z,12Z)-octadecadienoate + reduced [NADPH--hemoprotein reductase] + O2 = 11-hydroxy-(9Z,12Z)-octadecadienoate + oxidized [NADPH--hemoprotein reductase] + H2O + H(+)</text>
        <dbReference type="Rhea" id="RHEA:52284"/>
        <dbReference type="Rhea" id="RHEA-COMP:11964"/>
        <dbReference type="Rhea" id="RHEA-COMP:11965"/>
        <dbReference type="ChEBI" id="CHEBI:15377"/>
        <dbReference type="ChEBI" id="CHEBI:15378"/>
        <dbReference type="ChEBI" id="CHEBI:15379"/>
        <dbReference type="ChEBI" id="CHEBI:30245"/>
        <dbReference type="ChEBI" id="CHEBI:57618"/>
        <dbReference type="ChEBI" id="CHEBI:58210"/>
        <dbReference type="ChEBI" id="CHEBI:136522"/>
    </reaction>
    <physiologicalReaction direction="left-to-right" evidence="2">
        <dbReference type="Rhea" id="RHEA:52285"/>
    </physiologicalReaction>
</comment>
<comment type="cofactor">
    <cofactor evidence="1">
        <name>heme</name>
        <dbReference type="ChEBI" id="CHEBI:30413"/>
    </cofactor>
</comment>
<comment type="pathway">
    <text evidence="2">Cofactor metabolism; retinol metabolism.</text>
</comment>
<comment type="pathway">
    <text evidence="2">Steroid metabolism; cholesterol metabolism.</text>
</comment>
<comment type="pathway">
    <text evidence="2">Lipid metabolism; arachidonate metabolism.</text>
</comment>
<comment type="subunit">
    <text evidence="2">Interacts with PGRMC1; the interaction requires PGRMC1 homodimerization.</text>
</comment>
<comment type="subcellular location">
    <subcellularLocation>
        <location evidence="2">Endoplasmic reticulum membrane</location>
        <topology evidence="2">Peripheral membrane protein</topology>
    </subcellularLocation>
    <subcellularLocation>
        <location evidence="2">Microsome membrane</location>
        <topology evidence="2">Peripheral membrane protein</topology>
    </subcellularLocation>
</comment>
<comment type="similarity">
    <text evidence="3">Belongs to the cytochrome P450 family.</text>
</comment>
<sequence length="515" mass="58423">MPLSWLLPFSAMELLLTATIFYLVLWVVKAFRLQVPKGLKSPPGPWGWPLIGHVLTLGKNPHLALTRLSARYGDVLQIRIGSTPVVVLSGLDTIRQALVRQSDDFKGRPDLYSSTFISDGQSMIFNPDSGPVWAARRRLAQSALQSFSVASDPASVSSCYLEEHVSREAEHLVTKLLDLMAGPGCFEPSSQIVGSVANVIGAMCFGKNFPQTSEEMLQIVNTSKEFTEFASSGNPVDFFPILRYLPNPMLQQFKDFNKRFLQFLQKTVQEHYQDFDKNHVQDIASALFKHSEESPHVNGDLIPRKKIVNLVNDIFGAGFDTVTTAISWSLLYLVTKPEIQKKIHKELDAVIGRDRKPRLADRPQLPYMEAFILEVFRYSSFLPFTIPHCTTRDTILNGFYIPKDRCVFINQWQVNHDPKQWEDPFEFRPERFLLANNTAVDKTLSDKILLFGLGKRRCIGETLGRWEVFLFLAILLQQLEFSVPPGVKVDLTPVYGLTMKPPHCQHVQARPRFSK</sequence>
<evidence type="ECO:0000250" key="1"/>
<evidence type="ECO:0000250" key="2">
    <source>
        <dbReference type="UniProtKB" id="P05177"/>
    </source>
</evidence>
<evidence type="ECO:0000305" key="3"/>
<organism>
    <name type="scientific">Cavia porcellus</name>
    <name type="common">Guinea pig</name>
    <dbReference type="NCBI Taxonomy" id="10141"/>
    <lineage>
        <taxon>Eukaryota</taxon>
        <taxon>Metazoa</taxon>
        <taxon>Chordata</taxon>
        <taxon>Craniata</taxon>
        <taxon>Vertebrata</taxon>
        <taxon>Euteleostomi</taxon>
        <taxon>Mammalia</taxon>
        <taxon>Eutheria</taxon>
        <taxon>Euarchontoglires</taxon>
        <taxon>Glires</taxon>
        <taxon>Rodentia</taxon>
        <taxon>Hystricomorpha</taxon>
        <taxon>Caviidae</taxon>
        <taxon>Cavia</taxon>
    </lineage>
</organism>
<name>CP1A2_CAVPO</name>